<gene>
    <name evidence="1" type="primary">gpsB</name>
    <name type="ordered locus">BALH_1409</name>
</gene>
<protein>
    <recommendedName>
        <fullName evidence="1">Cell cycle protein GpsB</fullName>
    </recommendedName>
    <alternativeName>
        <fullName evidence="1">Guiding PBP1-shuttling protein</fullName>
    </alternativeName>
</protein>
<sequence>MISDKIKLTAKDILEKEFKTGMRGYQQEEVDKFLDMIIKDYEAFHKEFEQLKQQNARLKRELEEQKLAATQVPQQPVVQTPVAQPVYNNTNTDILKRLSNLEKAVFGSKLYE</sequence>
<name>GPSB_BACAH</name>
<proteinExistence type="inferred from homology"/>
<accession>A0RC09</accession>
<reference key="1">
    <citation type="journal article" date="2007" name="J. Bacteriol.">
        <title>The complete genome sequence of Bacillus thuringiensis Al Hakam.</title>
        <authorList>
            <person name="Challacombe J.F."/>
            <person name="Altherr M.R."/>
            <person name="Xie G."/>
            <person name="Bhotika S.S."/>
            <person name="Brown N."/>
            <person name="Bruce D."/>
            <person name="Campbell C.S."/>
            <person name="Campbell M.L."/>
            <person name="Chen J."/>
            <person name="Chertkov O."/>
            <person name="Cleland C."/>
            <person name="Dimitrijevic M."/>
            <person name="Doggett N.A."/>
            <person name="Fawcett J.J."/>
            <person name="Glavina T."/>
            <person name="Goodwin L.A."/>
            <person name="Green L.D."/>
            <person name="Han C.S."/>
            <person name="Hill K.K."/>
            <person name="Hitchcock P."/>
            <person name="Jackson P.J."/>
            <person name="Keim P."/>
            <person name="Kewalramani A.R."/>
            <person name="Longmire J."/>
            <person name="Lucas S."/>
            <person name="Malfatti S."/>
            <person name="Martinez D."/>
            <person name="McMurry K."/>
            <person name="Meincke L.J."/>
            <person name="Misra M."/>
            <person name="Moseman B.L."/>
            <person name="Mundt M."/>
            <person name="Munk A.C."/>
            <person name="Okinaka R.T."/>
            <person name="Parson-Quintana B."/>
            <person name="Reilly L.P."/>
            <person name="Richardson P."/>
            <person name="Robinson D.L."/>
            <person name="Saunders E."/>
            <person name="Tapia R."/>
            <person name="Tesmer J.G."/>
            <person name="Thayer N."/>
            <person name="Thompson L.S."/>
            <person name="Tice H."/>
            <person name="Ticknor L.O."/>
            <person name="Wills P.L."/>
            <person name="Gilna P."/>
            <person name="Brettin T.S."/>
        </authorList>
    </citation>
    <scope>NUCLEOTIDE SEQUENCE [LARGE SCALE GENOMIC DNA]</scope>
    <source>
        <strain>Al Hakam</strain>
    </source>
</reference>
<organism>
    <name type="scientific">Bacillus thuringiensis (strain Al Hakam)</name>
    <dbReference type="NCBI Taxonomy" id="412694"/>
    <lineage>
        <taxon>Bacteria</taxon>
        <taxon>Bacillati</taxon>
        <taxon>Bacillota</taxon>
        <taxon>Bacilli</taxon>
        <taxon>Bacillales</taxon>
        <taxon>Bacillaceae</taxon>
        <taxon>Bacillus</taxon>
        <taxon>Bacillus cereus group</taxon>
    </lineage>
</organism>
<keyword id="KW-0131">Cell cycle</keyword>
<keyword id="KW-0132">Cell division</keyword>
<keyword id="KW-0133">Cell shape</keyword>
<keyword id="KW-0175">Coiled coil</keyword>
<keyword id="KW-0963">Cytoplasm</keyword>
<comment type="function">
    <text evidence="1">Divisome component that associates with the complex late in its assembly, after the Z-ring is formed, and is dependent on DivIC and PBP2B for its recruitment to the divisome. Together with EzrA, is a key component of the system that regulates PBP1 localization during cell cycle progression. Its main role could be the removal of PBP1 from the cell pole after pole maturation is completed. Also contributes to the recruitment of PBP1 to the division complex. Not essential for septum formation.</text>
</comment>
<comment type="subunit">
    <text evidence="1">Forms polymers through the coiled coil domains. Interacts with PBP1, MreC and EzrA.</text>
</comment>
<comment type="subcellular location">
    <subcellularLocation>
        <location evidence="1">Cytoplasm</location>
    </subcellularLocation>
    <text evidence="1">Shuttles between the lateral wall and the division site in a cell cycle-dependent manner.</text>
</comment>
<comment type="similarity">
    <text evidence="1">Belongs to the GpsB family.</text>
</comment>
<comment type="sequence caution" evidence="2">
    <conflict type="erroneous initiation">
        <sequence resource="EMBL-CDS" id="ABK84752"/>
    </conflict>
</comment>
<feature type="chain" id="PRO_0000337915" description="Cell cycle protein GpsB">
    <location>
        <begin position="1"/>
        <end position="112"/>
    </location>
</feature>
<feature type="coiled-coil region" evidence="1">
    <location>
        <begin position="38"/>
        <end position="72"/>
    </location>
</feature>
<dbReference type="EMBL" id="CP000485">
    <property type="protein sequence ID" value="ABK84752.1"/>
    <property type="status" value="ALT_INIT"/>
    <property type="molecule type" value="Genomic_DNA"/>
</dbReference>
<dbReference type="RefSeq" id="WP_000622430.1">
    <property type="nucleotide sequence ID" value="NC_008600.1"/>
</dbReference>
<dbReference type="SMR" id="A0RC09"/>
<dbReference type="GeneID" id="93009481"/>
<dbReference type="KEGG" id="btl:BALH_1409"/>
<dbReference type="HOGENOM" id="CLU_140309_1_0_9"/>
<dbReference type="GO" id="GO:0005737">
    <property type="term" value="C:cytoplasm"/>
    <property type="evidence" value="ECO:0007669"/>
    <property type="project" value="UniProtKB-SubCell"/>
</dbReference>
<dbReference type="GO" id="GO:0051301">
    <property type="term" value="P:cell division"/>
    <property type="evidence" value="ECO:0007669"/>
    <property type="project" value="UniProtKB-UniRule"/>
</dbReference>
<dbReference type="GO" id="GO:0008360">
    <property type="term" value="P:regulation of cell shape"/>
    <property type="evidence" value="ECO:0007669"/>
    <property type="project" value="UniProtKB-UniRule"/>
</dbReference>
<dbReference type="Gene3D" id="6.10.250.660">
    <property type="match status" value="1"/>
</dbReference>
<dbReference type="HAMAP" id="MF_02011">
    <property type="entry name" value="GpsB"/>
    <property type="match status" value="1"/>
</dbReference>
<dbReference type="InterPro" id="IPR011229">
    <property type="entry name" value="Cell_cycle_GpsB"/>
</dbReference>
<dbReference type="InterPro" id="IPR019933">
    <property type="entry name" value="DivIVA_domain"/>
</dbReference>
<dbReference type="InterPro" id="IPR007793">
    <property type="entry name" value="DivIVA_fam"/>
</dbReference>
<dbReference type="NCBIfam" id="TIGR03544">
    <property type="entry name" value="DivI1A_domain"/>
    <property type="match status" value="1"/>
</dbReference>
<dbReference type="NCBIfam" id="NF010725">
    <property type="entry name" value="PRK14127.1"/>
    <property type="match status" value="1"/>
</dbReference>
<dbReference type="PANTHER" id="PTHR35794:SF1">
    <property type="entry name" value="CELL CYCLE PROTEIN GPSB"/>
    <property type="match status" value="1"/>
</dbReference>
<dbReference type="PANTHER" id="PTHR35794">
    <property type="entry name" value="CELL DIVISION PROTEIN DIVIVA"/>
    <property type="match status" value="1"/>
</dbReference>
<dbReference type="Pfam" id="PF05103">
    <property type="entry name" value="DivIVA"/>
    <property type="match status" value="1"/>
</dbReference>
<dbReference type="PIRSF" id="PIRSF029938">
    <property type="entry name" value="UCP029938"/>
    <property type="match status" value="1"/>
</dbReference>
<evidence type="ECO:0000255" key="1">
    <source>
        <dbReference type="HAMAP-Rule" id="MF_02011"/>
    </source>
</evidence>
<evidence type="ECO:0000305" key="2"/>